<organism>
    <name type="scientific">Cyriopagopus hainanus</name>
    <name type="common">Chinese bird spider</name>
    <name type="synonym">Haplopelma hainanum</name>
    <dbReference type="NCBI Taxonomy" id="209901"/>
    <lineage>
        <taxon>Eukaryota</taxon>
        <taxon>Metazoa</taxon>
        <taxon>Ecdysozoa</taxon>
        <taxon>Arthropoda</taxon>
        <taxon>Chelicerata</taxon>
        <taxon>Arachnida</taxon>
        <taxon>Araneae</taxon>
        <taxon>Mygalomorphae</taxon>
        <taxon>Theraphosidae</taxon>
        <taxon>Haplopelma</taxon>
    </lineage>
</organism>
<accession>D2Y268</accession>
<protein>
    <recommendedName>
        <fullName>U11-theraphotoxin-Hhn1a</fullName>
        <shortName>U11-TRTX-Hhn1a</shortName>
    </recommendedName>
    <alternativeName>
        <fullName>Hainantoxin-XVI.16</fullName>
        <shortName>HNTX-XVI.16</shortName>
    </alternativeName>
    <alternativeName>
        <fullName>Peptide F4-19.87</fullName>
    </alternativeName>
</protein>
<evidence type="ECO:0000250" key="1"/>
<evidence type="ECO:0000255" key="2"/>
<evidence type="ECO:0000269" key="3">
    <source>
    </source>
</evidence>
<evidence type="ECO:0000305" key="4"/>
<sequence>MNTVRVTFLLVFVLAVSLGRADKDENRMEMQEKTEQGKSYLDFAENLLLQKLEELEAKLLEEDSEESRNSRQKRCIGEGVPCDENDPRCCSGLVCLKPTLHGIWYKSYYCYKK</sequence>
<reference key="1">
    <citation type="journal article" date="2010" name="J. Proteome Res.">
        <title>Molecular diversification of peptide toxins from the tarantula Haplopelma hainanum (Ornithoctonus hainana) venom based on transcriptomic, peptidomic, and genomic analyses.</title>
        <authorList>
            <person name="Tang X."/>
            <person name="Zhang Y."/>
            <person name="Hu W."/>
            <person name="Xu D."/>
            <person name="Tao H."/>
            <person name="Yang X."/>
            <person name="Li Y."/>
            <person name="Jiang L."/>
            <person name="Liang S."/>
        </authorList>
    </citation>
    <scope>NUCLEOTIDE SEQUENCE [LARGE SCALE MRNA]</scope>
    <scope>PROTEIN SEQUENCE OF 75-113</scope>
    <scope>IDENTIFICATION BY MASS SPECTROMETRY</scope>
    <source>
        <tissue>Venom</tissue>
        <tissue>Venom gland</tissue>
    </source>
</reference>
<dbReference type="EMBL" id="GU292945">
    <property type="protein sequence ID" value="ADB56761.1"/>
    <property type="molecule type" value="mRNA"/>
</dbReference>
<dbReference type="ArachnoServer" id="AS001592">
    <property type="toxin name" value="U11-theraphotoxin-Hhn1a"/>
</dbReference>
<dbReference type="GO" id="GO:0005576">
    <property type="term" value="C:extracellular region"/>
    <property type="evidence" value="ECO:0007669"/>
    <property type="project" value="UniProtKB-SubCell"/>
</dbReference>
<dbReference type="GO" id="GO:0019871">
    <property type="term" value="F:sodium channel inhibitor activity"/>
    <property type="evidence" value="ECO:0007669"/>
    <property type="project" value="InterPro"/>
</dbReference>
<dbReference type="GO" id="GO:0090729">
    <property type="term" value="F:toxin activity"/>
    <property type="evidence" value="ECO:0007669"/>
    <property type="project" value="UniProtKB-KW"/>
</dbReference>
<dbReference type="InterPro" id="IPR012627">
    <property type="entry name" value="Toxin_22"/>
</dbReference>
<dbReference type="Pfam" id="PF08092">
    <property type="entry name" value="Toxin_22"/>
    <property type="match status" value="1"/>
</dbReference>
<comment type="function">
    <text evidence="1">Probable ion channel inhibitor.</text>
</comment>
<comment type="subcellular location">
    <subcellularLocation>
        <location>Secreted</location>
    </subcellularLocation>
</comment>
<comment type="tissue specificity">
    <text>Expressed by the venom gland.</text>
</comment>
<comment type="domain">
    <text evidence="1">The presence of a 'disulfide through disulfide knot' structurally defines this protein as a knottin.</text>
</comment>
<comment type="similarity">
    <text evidence="4">Belongs to the neurotoxin 14 (magi-1) family. 01 (HNTX-16) subfamily.</text>
</comment>
<name>H1616_CYRHA</name>
<keyword id="KW-0903">Direct protein sequencing</keyword>
<keyword id="KW-1015">Disulfide bond</keyword>
<keyword id="KW-0872">Ion channel impairing toxin</keyword>
<keyword id="KW-0960">Knottin</keyword>
<keyword id="KW-0964">Secreted</keyword>
<keyword id="KW-0732">Signal</keyword>
<keyword id="KW-0800">Toxin</keyword>
<proteinExistence type="evidence at protein level"/>
<feature type="signal peptide" evidence="2">
    <location>
        <begin position="1"/>
        <end position="21"/>
    </location>
</feature>
<feature type="propeptide" id="PRO_0000400887" evidence="3">
    <location>
        <begin position="22"/>
        <end position="74"/>
    </location>
</feature>
<feature type="peptide" id="PRO_0000400888" description="U11-theraphotoxin-Hhn1a">
    <location>
        <begin position="75"/>
        <end position="113"/>
    </location>
</feature>
<feature type="disulfide bond" evidence="1">
    <location>
        <begin position="75"/>
        <end position="90"/>
    </location>
</feature>
<feature type="disulfide bond" evidence="1">
    <location>
        <begin position="82"/>
        <end position="95"/>
    </location>
</feature>
<feature type="disulfide bond" evidence="1">
    <location>
        <begin position="89"/>
        <end position="110"/>
    </location>
</feature>